<gene>
    <name type="primary">CP</name>
</gene>
<reference key="1">
    <citation type="journal article" date="1993" name="Virology">
        <title>Nucleotide sequence and genetic organization of peanut clump virus RNA 2 and partial characterization of deleted forms.</title>
        <authorList>
            <person name="Manohar S.K."/>
            <person name="Guilley H."/>
            <person name="Dollet M."/>
            <person name="Richards K."/>
            <person name="Jonard G."/>
        </authorList>
    </citation>
    <scope>NUCLEOTIDE SEQUENCE [GENOMIC RNA]</scope>
</reference>
<proteinExistence type="inferred from homology"/>
<dbReference type="EMBL" id="L07269">
    <property type="protein sequence ID" value="AAA17436.1"/>
    <property type="molecule type" value="Genomic_RNA"/>
</dbReference>
<dbReference type="RefSeq" id="NP_620028.1">
    <property type="nucleotide sequence ID" value="NC_003668.1"/>
</dbReference>
<dbReference type="SMR" id="Q08308"/>
<dbReference type="KEGG" id="vg:991038"/>
<dbReference type="Proteomes" id="UP000001668">
    <property type="component" value="Genome"/>
</dbReference>
<dbReference type="GO" id="GO:0019029">
    <property type="term" value="C:helical viral capsid"/>
    <property type="evidence" value="ECO:0007669"/>
    <property type="project" value="UniProtKB-KW"/>
</dbReference>
<dbReference type="GO" id="GO:0005198">
    <property type="term" value="F:structural molecule activity"/>
    <property type="evidence" value="ECO:0007669"/>
    <property type="project" value="InterPro"/>
</dbReference>
<dbReference type="Gene3D" id="1.20.120.70">
    <property type="entry name" value="Tobacco mosaic virus-like, coat protein"/>
    <property type="match status" value="1"/>
</dbReference>
<dbReference type="InterPro" id="IPR001337">
    <property type="entry name" value="TMV-like_coat"/>
</dbReference>
<dbReference type="InterPro" id="IPR036417">
    <property type="entry name" value="TMV-like_coat_sf"/>
</dbReference>
<dbReference type="Pfam" id="PF00721">
    <property type="entry name" value="TMV_coat"/>
    <property type="match status" value="1"/>
</dbReference>
<dbReference type="SUPFAM" id="SSF47195">
    <property type="entry name" value="TMV-like viral coat proteins"/>
    <property type="match status" value="1"/>
</dbReference>
<protein>
    <recommendedName>
        <fullName>Capsid protein</fullName>
    </recommendedName>
    <alternativeName>
        <fullName>Coat protein</fullName>
    </alternativeName>
    <alternativeName>
        <fullName>P23</fullName>
    </alternativeName>
</protein>
<keyword id="KW-0167">Capsid protein</keyword>
<keyword id="KW-1139">Helical capsid protein</keyword>
<keyword id="KW-1185">Reference proteome</keyword>
<keyword id="KW-0946">Virion</keyword>
<evidence type="ECO:0000305" key="1"/>
<sequence length="207" mass="22660">MSNIAEVSRGGGHYGVDPWRQHIIKNRINADWWIRLDHWETLLADLRGVSFEVNSSRSQVADFINRVPKDLPAGVSVRFPGPRGNLGSTNYTEVYFVRIKSELKQKLLSLIAAADQGKNRDVEIGRPNAPVVSTGAGGNQAIVAQRGVNTVRDQQPLRDGSLHYRYLVQDIELAGAEQFDRALFEETFSLNWTVVAPPAGGGGGGAP</sequence>
<organism>
    <name type="scientific">Peanut clump virus (isolate 87/TGTA2)</name>
    <name type="common">PCV</name>
    <dbReference type="NCBI Taxonomy" id="652837"/>
    <lineage>
        <taxon>Viruses</taxon>
        <taxon>Riboviria</taxon>
        <taxon>Orthornavirae</taxon>
        <taxon>Kitrinoviricota</taxon>
        <taxon>Alsuviricetes</taxon>
        <taxon>Martellivirales</taxon>
        <taxon>Virgaviridae</taxon>
        <taxon>Pecluvirus</taxon>
        <taxon>Peanut clump virus</taxon>
    </lineage>
</organism>
<accession>Q08308</accession>
<comment type="function">
    <text>Capsid protein self-assembles to form rod-shaped virions about 25 nm in diameter with a central canal enclosing the viral genomic RNA.</text>
</comment>
<comment type="subcellular location">
    <subcellularLocation>
        <location evidence="1">Virion</location>
    </subcellularLocation>
</comment>
<comment type="similarity">
    <text evidence="1">Belongs to the virgaviridae capsid protein family.</text>
</comment>
<name>CAPSD_PCV87</name>
<organismHost>
    <name type="scientific">Arachis hypogaea</name>
    <name type="common">Peanut</name>
    <dbReference type="NCBI Taxonomy" id="3818"/>
</organismHost>
<organismHost>
    <name type="scientific">Setaria italica</name>
    <name type="common">Foxtail millet</name>
    <name type="synonym">Panicum italicum</name>
    <dbReference type="NCBI Taxonomy" id="4555"/>
</organismHost>
<organismHost>
    <name type="scientific">Sorghum arundinaceum</name>
    <dbReference type="NCBI Taxonomy" id="91525"/>
</organismHost>
<organismHost>
    <name type="scientific">Sorghum bicolor</name>
    <name type="common">Sorghum</name>
    <name type="synonym">Sorghum vulgare</name>
    <dbReference type="NCBI Taxonomy" id="4558"/>
</organismHost>
<feature type="chain" id="PRO_0000409152" description="Capsid protein">
    <location>
        <begin position="1"/>
        <end position="207"/>
    </location>
</feature>